<proteinExistence type="inferred from homology"/>
<comment type="catalytic activity">
    <reaction evidence="1">
        <text>2-formamido-N(1)-(5-O-phospho-beta-D-ribosyl)acetamidine + ATP = 5-amino-1-(5-phospho-beta-D-ribosyl)imidazole + ADP + phosphate + H(+)</text>
        <dbReference type="Rhea" id="RHEA:23032"/>
        <dbReference type="ChEBI" id="CHEBI:15378"/>
        <dbReference type="ChEBI" id="CHEBI:30616"/>
        <dbReference type="ChEBI" id="CHEBI:43474"/>
        <dbReference type="ChEBI" id="CHEBI:137981"/>
        <dbReference type="ChEBI" id="CHEBI:147287"/>
        <dbReference type="ChEBI" id="CHEBI:456216"/>
        <dbReference type="EC" id="6.3.3.1"/>
    </reaction>
</comment>
<comment type="pathway">
    <text evidence="1">Purine metabolism; IMP biosynthesis via de novo pathway; 5-amino-1-(5-phospho-D-ribosyl)imidazole from N(2)-formyl-N(1)-(5-phospho-D-ribosyl)glycinamide: step 2/2.</text>
</comment>
<comment type="subcellular location">
    <subcellularLocation>
        <location evidence="1">Cytoplasm</location>
    </subcellularLocation>
</comment>
<comment type="similarity">
    <text evidence="1">Belongs to the AIR synthase family.</text>
</comment>
<organism>
    <name type="scientific">Thermoplasma volcanium (strain ATCC 51530 / DSM 4299 / JCM 9571 / NBRC 15438 / GSS1)</name>
    <dbReference type="NCBI Taxonomy" id="273116"/>
    <lineage>
        <taxon>Archaea</taxon>
        <taxon>Methanobacteriati</taxon>
        <taxon>Thermoplasmatota</taxon>
        <taxon>Thermoplasmata</taxon>
        <taxon>Thermoplasmatales</taxon>
        <taxon>Thermoplasmataceae</taxon>
        <taxon>Thermoplasma</taxon>
    </lineage>
</organism>
<accession>Q97CD7</accession>
<dbReference type="EC" id="6.3.3.1" evidence="1"/>
<dbReference type="EMBL" id="BA000011">
    <property type="protein sequence ID" value="BAB59307.1"/>
    <property type="molecule type" value="Genomic_DNA"/>
</dbReference>
<dbReference type="RefSeq" id="WP_010916420.1">
    <property type="nucleotide sequence ID" value="NC_002689.2"/>
</dbReference>
<dbReference type="SMR" id="Q97CD7"/>
<dbReference type="STRING" id="273116.gene:9380935"/>
<dbReference type="PaxDb" id="273116-14324379"/>
<dbReference type="GeneID" id="1441650"/>
<dbReference type="KEGG" id="tvo:TVG0175535"/>
<dbReference type="eggNOG" id="arCOG00639">
    <property type="taxonomic scope" value="Archaea"/>
</dbReference>
<dbReference type="HOGENOM" id="CLU_047116_0_0_2"/>
<dbReference type="OrthoDB" id="6605at2157"/>
<dbReference type="PhylomeDB" id="Q97CD7"/>
<dbReference type="UniPathway" id="UPA00074">
    <property type="reaction ID" value="UER00129"/>
</dbReference>
<dbReference type="Proteomes" id="UP000001017">
    <property type="component" value="Chromosome"/>
</dbReference>
<dbReference type="GO" id="GO:0005829">
    <property type="term" value="C:cytosol"/>
    <property type="evidence" value="ECO:0007669"/>
    <property type="project" value="TreeGrafter"/>
</dbReference>
<dbReference type="GO" id="GO:0005524">
    <property type="term" value="F:ATP binding"/>
    <property type="evidence" value="ECO:0007669"/>
    <property type="project" value="UniProtKB-KW"/>
</dbReference>
<dbReference type="GO" id="GO:0004637">
    <property type="term" value="F:phosphoribosylamine-glycine ligase activity"/>
    <property type="evidence" value="ECO:0007669"/>
    <property type="project" value="TreeGrafter"/>
</dbReference>
<dbReference type="GO" id="GO:0004641">
    <property type="term" value="F:phosphoribosylformylglycinamidine cyclo-ligase activity"/>
    <property type="evidence" value="ECO:0007669"/>
    <property type="project" value="UniProtKB-UniRule"/>
</dbReference>
<dbReference type="GO" id="GO:0006189">
    <property type="term" value="P:'de novo' IMP biosynthetic process"/>
    <property type="evidence" value="ECO:0007669"/>
    <property type="project" value="UniProtKB-UniRule"/>
</dbReference>
<dbReference type="GO" id="GO:0046084">
    <property type="term" value="P:adenine biosynthetic process"/>
    <property type="evidence" value="ECO:0007669"/>
    <property type="project" value="TreeGrafter"/>
</dbReference>
<dbReference type="CDD" id="cd02196">
    <property type="entry name" value="PurM"/>
    <property type="match status" value="1"/>
</dbReference>
<dbReference type="Gene3D" id="3.90.650.10">
    <property type="entry name" value="PurM-like C-terminal domain"/>
    <property type="match status" value="1"/>
</dbReference>
<dbReference type="Gene3D" id="3.30.1330.10">
    <property type="entry name" value="PurM-like, N-terminal domain"/>
    <property type="match status" value="1"/>
</dbReference>
<dbReference type="HAMAP" id="MF_00741">
    <property type="entry name" value="AIRS"/>
    <property type="match status" value="1"/>
</dbReference>
<dbReference type="InterPro" id="IPR010918">
    <property type="entry name" value="PurM-like_C_dom"/>
</dbReference>
<dbReference type="InterPro" id="IPR036676">
    <property type="entry name" value="PurM-like_C_sf"/>
</dbReference>
<dbReference type="InterPro" id="IPR016188">
    <property type="entry name" value="PurM-like_N"/>
</dbReference>
<dbReference type="InterPro" id="IPR036921">
    <property type="entry name" value="PurM-like_N_sf"/>
</dbReference>
<dbReference type="InterPro" id="IPR004733">
    <property type="entry name" value="PurM_cligase"/>
</dbReference>
<dbReference type="NCBIfam" id="TIGR00878">
    <property type="entry name" value="purM"/>
    <property type="match status" value="1"/>
</dbReference>
<dbReference type="PANTHER" id="PTHR10520:SF12">
    <property type="entry name" value="TRIFUNCTIONAL PURINE BIOSYNTHETIC PROTEIN ADENOSINE-3"/>
    <property type="match status" value="1"/>
</dbReference>
<dbReference type="PANTHER" id="PTHR10520">
    <property type="entry name" value="TRIFUNCTIONAL PURINE BIOSYNTHETIC PROTEIN ADENOSINE-3-RELATED"/>
    <property type="match status" value="1"/>
</dbReference>
<dbReference type="Pfam" id="PF00586">
    <property type="entry name" value="AIRS"/>
    <property type="match status" value="1"/>
</dbReference>
<dbReference type="Pfam" id="PF02769">
    <property type="entry name" value="AIRS_C"/>
    <property type="match status" value="1"/>
</dbReference>
<dbReference type="SUPFAM" id="SSF56042">
    <property type="entry name" value="PurM C-terminal domain-like"/>
    <property type="match status" value="1"/>
</dbReference>
<dbReference type="SUPFAM" id="SSF55326">
    <property type="entry name" value="PurM N-terminal domain-like"/>
    <property type="match status" value="1"/>
</dbReference>
<evidence type="ECO:0000255" key="1">
    <source>
        <dbReference type="HAMAP-Rule" id="MF_00741"/>
    </source>
</evidence>
<feature type="chain" id="PRO_0000148292" description="Phosphoribosylformylglycinamidine cyclo-ligase">
    <location>
        <begin position="1"/>
        <end position="338"/>
    </location>
</feature>
<gene>
    <name evidence="1" type="primary">purM</name>
    <name type="ordered locus">TV0165</name>
    <name type="ORF">TVG0175535</name>
</gene>
<reference key="1">
    <citation type="journal article" date="2000" name="Proc. Natl. Acad. Sci. U.S.A.">
        <title>Archaeal adaptation to higher temperatures revealed by genomic sequence of Thermoplasma volcanium.</title>
        <authorList>
            <person name="Kawashima T."/>
            <person name="Amano N."/>
            <person name="Koike H."/>
            <person name="Makino S."/>
            <person name="Higuchi S."/>
            <person name="Kawashima-Ohya Y."/>
            <person name="Watanabe K."/>
            <person name="Yamazaki M."/>
            <person name="Kanehori K."/>
            <person name="Kawamoto T."/>
            <person name="Nunoshiba T."/>
            <person name="Yamamoto Y."/>
            <person name="Aramaki H."/>
            <person name="Makino K."/>
            <person name="Suzuki M."/>
        </authorList>
    </citation>
    <scope>NUCLEOTIDE SEQUENCE [LARGE SCALE GENOMIC DNA]</scope>
    <source>
        <strain>ATCC 51530 / DSM 4299 / JCM 9571 / NBRC 15438 / GSS1</strain>
    </source>
</reference>
<name>PUR5_THEVO</name>
<sequence>MPEVKDGIIDRKMQGEFVSSFIRQLKFHREDFKNIGYIGGFTSLIDMGNFALSFNNDGVGTKTMIAEQANKYDTLGIDCVAMNVNDAITVGSEPIAMVDYLAVRDLNEDIAKQLGNGFNVGAQIANISIVGGETAVVPEIVNHIDVSGAVIGIVQKNQIITGANIKEGDVIIGLGSSGLHSNGFTTVRKIISDNEINLFDNFPGESKKTYEVLLEPTRIYVREILDVMGIIQIKGMANITGGGFKNITRMKDMKYVIDDPMEPQNVFVRLMELGNLNYKQMYEIFNMGTGFVVVIGEDDKIDFINTLKNRVPLKVIGHVENGTGVEIPKYSVSLMGYY</sequence>
<protein>
    <recommendedName>
        <fullName evidence="1">Phosphoribosylformylglycinamidine cyclo-ligase</fullName>
        <ecNumber evidence="1">6.3.3.1</ecNumber>
    </recommendedName>
    <alternativeName>
        <fullName evidence="1">AIR synthase</fullName>
    </alternativeName>
    <alternativeName>
        <fullName evidence="1">AIRS</fullName>
    </alternativeName>
    <alternativeName>
        <fullName evidence="1">Phosphoribosyl-aminoimidazole synthetase</fullName>
    </alternativeName>
</protein>
<keyword id="KW-0067">ATP-binding</keyword>
<keyword id="KW-0963">Cytoplasm</keyword>
<keyword id="KW-0436">Ligase</keyword>
<keyword id="KW-0547">Nucleotide-binding</keyword>
<keyword id="KW-0658">Purine biosynthesis</keyword>